<dbReference type="EC" id="1.14.13.-" evidence="8"/>
<dbReference type="EMBL" id="AY660666">
    <property type="protein sequence ID" value="AAT91065.1"/>
    <property type="molecule type" value="mRNA"/>
</dbReference>
<dbReference type="EMBL" id="AP005471">
    <property type="protein sequence ID" value="BAD54595.1"/>
    <property type="molecule type" value="Genomic_DNA"/>
</dbReference>
<dbReference type="EMBL" id="AP008212">
    <property type="protein sequence ID" value="BAF19821.1"/>
    <property type="molecule type" value="Genomic_DNA"/>
</dbReference>
<dbReference type="EMBL" id="AP014962">
    <property type="protein sequence ID" value="BAS98308.1"/>
    <property type="molecule type" value="Genomic_DNA"/>
</dbReference>
<dbReference type="EMBL" id="AK100964">
    <property type="protein sequence ID" value="BAG94854.1"/>
    <property type="molecule type" value="mRNA"/>
</dbReference>
<dbReference type="RefSeq" id="XP_015643249.1">
    <property type="nucleotide sequence ID" value="XM_015787763.1"/>
</dbReference>
<dbReference type="SMR" id="Q5Z5R7"/>
<dbReference type="FunCoup" id="Q5Z5R7">
    <property type="interactions" value="288"/>
</dbReference>
<dbReference type="STRING" id="39947.Q5Z5R7"/>
<dbReference type="PaxDb" id="39947-Q5Z5R7"/>
<dbReference type="EnsemblPlants" id="Os06t0569900-01">
    <property type="protein sequence ID" value="Os06t0569900-01"/>
    <property type="gene ID" value="Os06g0569900"/>
</dbReference>
<dbReference type="Gramene" id="Os06t0569900-01">
    <property type="protein sequence ID" value="Os06t0569900-01"/>
    <property type="gene ID" value="Os06g0569900"/>
</dbReference>
<dbReference type="KEGG" id="dosa:Os06g0569900"/>
<dbReference type="eggNOG" id="KOG0156">
    <property type="taxonomic scope" value="Eukaryota"/>
</dbReference>
<dbReference type="HOGENOM" id="CLU_001570_4_0_1"/>
<dbReference type="InParanoid" id="Q5Z5R7"/>
<dbReference type="OMA" id="TEEHLPW"/>
<dbReference type="OrthoDB" id="2789670at2759"/>
<dbReference type="BRENDA" id="1.14.14.86">
    <property type="organism ID" value="8948"/>
</dbReference>
<dbReference type="PlantReactome" id="R-OSA-1119557">
    <property type="pathway name" value="GA12 biosynthesis"/>
</dbReference>
<dbReference type="Proteomes" id="UP000000763">
    <property type="component" value="Chromosome 6"/>
</dbReference>
<dbReference type="Proteomes" id="UP000059680">
    <property type="component" value="Chromosome 6"/>
</dbReference>
<dbReference type="GO" id="GO:0009707">
    <property type="term" value="C:chloroplast outer membrane"/>
    <property type="evidence" value="ECO:0000318"/>
    <property type="project" value="GO_Central"/>
</dbReference>
<dbReference type="GO" id="GO:0052615">
    <property type="term" value="F:ent-kaurene oxidase activity"/>
    <property type="evidence" value="ECO:0007669"/>
    <property type="project" value="InterPro"/>
</dbReference>
<dbReference type="GO" id="GO:0020037">
    <property type="term" value="F:heme binding"/>
    <property type="evidence" value="ECO:0007669"/>
    <property type="project" value="InterPro"/>
</dbReference>
<dbReference type="GO" id="GO:0005506">
    <property type="term" value="F:iron ion binding"/>
    <property type="evidence" value="ECO:0007669"/>
    <property type="project" value="InterPro"/>
</dbReference>
<dbReference type="GO" id="GO:0016709">
    <property type="term" value="F:oxidoreductase activity, acting on paired donors, with incorporation or reduction of molecular oxygen, NAD(P)H as one donor, and incorporation of one atom of oxygen"/>
    <property type="evidence" value="ECO:0000318"/>
    <property type="project" value="GO_Central"/>
</dbReference>
<dbReference type="GO" id="GO:0010241">
    <property type="term" value="P:ent-kaurene oxidation to kaurenoic acid"/>
    <property type="evidence" value="ECO:0000318"/>
    <property type="project" value="GO_Central"/>
</dbReference>
<dbReference type="GO" id="GO:0009686">
    <property type="term" value="P:gibberellin biosynthetic process"/>
    <property type="evidence" value="ECO:0000318"/>
    <property type="project" value="GO_Central"/>
</dbReference>
<dbReference type="CDD" id="cd11075">
    <property type="entry name" value="CYP77_89"/>
    <property type="match status" value="1"/>
</dbReference>
<dbReference type="FunFam" id="1.10.630.10:FF:000062">
    <property type="entry name" value="Ent-kaurene oxidase 2"/>
    <property type="match status" value="1"/>
</dbReference>
<dbReference type="Gene3D" id="1.10.630.10">
    <property type="entry name" value="Cytochrome P450"/>
    <property type="match status" value="1"/>
</dbReference>
<dbReference type="InterPro" id="IPR001128">
    <property type="entry name" value="Cyt_P450"/>
</dbReference>
<dbReference type="InterPro" id="IPR017972">
    <property type="entry name" value="Cyt_P450_CS"/>
</dbReference>
<dbReference type="InterPro" id="IPR002401">
    <property type="entry name" value="Cyt_P450_E_grp-I"/>
</dbReference>
<dbReference type="InterPro" id="IPR036396">
    <property type="entry name" value="Cyt_P450_sf"/>
</dbReference>
<dbReference type="InterPro" id="IPR044225">
    <property type="entry name" value="KO_chloroplastic"/>
</dbReference>
<dbReference type="PANTHER" id="PTHR47283">
    <property type="entry name" value="ENT-KAURENE OXIDASE, CHLOROPLASTIC"/>
    <property type="match status" value="1"/>
</dbReference>
<dbReference type="PANTHER" id="PTHR47283:SF1">
    <property type="entry name" value="ENT-KAURENE OXIDASE, CHLOROPLASTIC"/>
    <property type="match status" value="1"/>
</dbReference>
<dbReference type="Pfam" id="PF00067">
    <property type="entry name" value="p450"/>
    <property type="match status" value="1"/>
</dbReference>
<dbReference type="PRINTS" id="PR00463">
    <property type="entry name" value="EP450I"/>
</dbReference>
<dbReference type="PRINTS" id="PR00385">
    <property type="entry name" value="P450"/>
</dbReference>
<dbReference type="SUPFAM" id="SSF48264">
    <property type="entry name" value="Cytochrome P450"/>
    <property type="match status" value="1"/>
</dbReference>
<dbReference type="PROSITE" id="PS00086">
    <property type="entry name" value="CYTOCHROME_P450"/>
    <property type="match status" value="1"/>
</dbReference>
<gene>
    <name evidence="8" type="primary">CYP701A19</name>
    <name evidence="10" type="ordered locus">Os06g0569900</name>
    <name evidence="8" type="ordered locus">LOC_Os06g37330</name>
    <name evidence="9" type="ORF">OSJNBa0062E01.34</name>
</gene>
<evidence type="ECO:0000250" key="1">
    <source>
        <dbReference type="UniProtKB" id="P04798"/>
    </source>
</evidence>
<evidence type="ECO:0000255" key="2"/>
<evidence type="ECO:0000255" key="3">
    <source>
        <dbReference type="RuleBase" id="RU000461"/>
    </source>
</evidence>
<evidence type="ECO:0000269" key="4">
    <source>
    </source>
</evidence>
<evidence type="ECO:0000303" key="5">
    <source>
    </source>
</evidence>
<evidence type="ECO:0000303" key="6">
    <source>
    </source>
</evidence>
<evidence type="ECO:0000303" key="7">
    <source>
    </source>
</evidence>
<evidence type="ECO:0000305" key="8"/>
<evidence type="ECO:0000312" key="9">
    <source>
        <dbReference type="EMBL" id="BAD54595.1"/>
    </source>
</evidence>
<evidence type="ECO:0000312" key="10">
    <source>
        <dbReference type="EMBL" id="BAF19821.1"/>
    </source>
</evidence>
<comment type="function">
    <text evidence="8">May hydroxylate diterpenes.</text>
</comment>
<comment type="cofactor">
    <cofactor evidence="1">
        <name>heme</name>
        <dbReference type="ChEBI" id="CHEBI:30413"/>
    </cofactor>
</comment>
<comment type="subcellular location">
    <subcellularLocation>
        <location evidence="2">Membrane</location>
        <topology evidence="2">Single-pass membrane protein</topology>
    </subcellularLocation>
</comment>
<comment type="tissue specificity">
    <text evidence="4">Expressed in leaf blades.</text>
</comment>
<comment type="similarity">
    <text evidence="3">Belongs to the cytochrome P450 family.</text>
</comment>
<reference key="1">
    <citation type="journal article" date="2005" name="Plant Physiol.">
        <title>The rice dwarf virus P2 protein interacts with ent-kaurene oxidases in vivo, leading to reduced biosynthesis of gibberellins and rice dwarf symptoms.</title>
        <authorList>
            <person name="Zhu S."/>
            <person name="Gao F."/>
            <person name="Cao X."/>
            <person name="Chen M."/>
            <person name="Ye G."/>
            <person name="Wei C."/>
            <person name="Li Y."/>
        </authorList>
    </citation>
    <scope>NUCLEOTIDE SEQUENCE [MRNA]</scope>
    <source>
        <strain>cv. Xiushui 11</strain>
    </source>
</reference>
<reference key="2">
    <citation type="journal article" date="2005" name="Nature">
        <title>The map-based sequence of the rice genome.</title>
        <authorList>
            <consortium name="International rice genome sequencing project (IRGSP)"/>
        </authorList>
    </citation>
    <scope>NUCLEOTIDE SEQUENCE [LARGE SCALE GENOMIC DNA]</scope>
    <source>
        <strain>cv. Nipponbare</strain>
    </source>
</reference>
<reference key="3">
    <citation type="journal article" date="2008" name="Nucleic Acids Res.">
        <title>The rice annotation project database (RAP-DB): 2008 update.</title>
        <authorList>
            <consortium name="The rice annotation project (RAP)"/>
        </authorList>
    </citation>
    <scope>GENOME REANNOTATION</scope>
    <source>
        <strain>cv. Nipponbare</strain>
    </source>
</reference>
<reference key="4">
    <citation type="journal article" date="2013" name="Rice">
        <title>Improvement of the Oryza sativa Nipponbare reference genome using next generation sequence and optical map data.</title>
        <authorList>
            <person name="Kawahara Y."/>
            <person name="de la Bastide M."/>
            <person name="Hamilton J.P."/>
            <person name="Kanamori H."/>
            <person name="McCombie W.R."/>
            <person name="Ouyang S."/>
            <person name="Schwartz D.C."/>
            <person name="Tanaka T."/>
            <person name="Wu J."/>
            <person name="Zhou S."/>
            <person name="Childs K.L."/>
            <person name="Davidson R.M."/>
            <person name="Lin H."/>
            <person name="Quesada-Ocampo L."/>
            <person name="Vaillancourt B."/>
            <person name="Sakai H."/>
            <person name="Lee S.S."/>
            <person name="Kim J."/>
            <person name="Numa H."/>
            <person name="Itoh T."/>
            <person name="Buell C.R."/>
            <person name="Matsumoto T."/>
        </authorList>
    </citation>
    <scope>GENOME REANNOTATION</scope>
    <source>
        <strain>cv. Nipponbare</strain>
    </source>
</reference>
<reference key="5">
    <citation type="journal article" date="2003" name="Science">
        <title>Collection, mapping, and annotation of over 28,000 cDNA clones from japonica rice.</title>
        <authorList>
            <consortium name="The rice full-length cDNA consortium"/>
        </authorList>
    </citation>
    <scope>NUCLEOTIDE SEQUENCE [LARGE SCALE MRNA]</scope>
    <source>
        <strain>cv. Nipponbare</strain>
    </source>
</reference>
<reference key="6">
    <citation type="journal article" date="2004" name="Plant Mol. Biol.">
        <title>A rice semi-dwarf gene, Tan-Ginbozu (D35), encodes the gibberellin biosynthesis enzyme, ent-kaurene oxidase.</title>
        <authorList>
            <person name="Itoh H."/>
            <person name="Tatsumi T."/>
            <person name="Sakamoto T."/>
            <person name="Otomo K."/>
            <person name="Toyomasu T."/>
            <person name="Kitano H."/>
            <person name="Ashikari M."/>
            <person name="Ichihara S."/>
            <person name="Matsuoka M."/>
        </authorList>
    </citation>
    <scope>TISSUE SPECIFICITY</scope>
</reference>
<reference key="7">
    <citation type="journal article" date="2004" name="Plant Physiol.">
        <title>An overview of gibberellin metabolism enzyme genes and their related mutants in rice.</title>
        <authorList>
            <person name="Sakamoto T."/>
            <person name="Miura K."/>
            <person name="Itoh H."/>
            <person name="Tatsumi T."/>
            <person name="Ueguchi-Tanaka M."/>
            <person name="Ishiyama K."/>
            <person name="Kobayashi M."/>
            <person name="Agrawal G.K."/>
            <person name="Takeda S."/>
            <person name="Abe K."/>
            <person name="Miyao A."/>
            <person name="Hirochika H."/>
            <person name="Kitano H."/>
            <person name="Ashikari M."/>
            <person name="Matsuoka M."/>
        </authorList>
    </citation>
    <scope>GENE FAMILY</scope>
</reference>
<organism>
    <name type="scientific">Oryza sativa subsp. japonica</name>
    <name type="common">Rice</name>
    <dbReference type="NCBI Taxonomy" id="39947"/>
    <lineage>
        <taxon>Eukaryota</taxon>
        <taxon>Viridiplantae</taxon>
        <taxon>Streptophyta</taxon>
        <taxon>Embryophyta</taxon>
        <taxon>Tracheophyta</taxon>
        <taxon>Spermatophyta</taxon>
        <taxon>Magnoliopsida</taxon>
        <taxon>Liliopsida</taxon>
        <taxon>Poales</taxon>
        <taxon>Poaceae</taxon>
        <taxon>BOP clade</taxon>
        <taxon>Oryzoideae</taxon>
        <taxon>Oryzeae</taxon>
        <taxon>Oryzinae</taxon>
        <taxon>Oryza</taxon>
        <taxon>Oryza sativa</taxon>
    </lineage>
</organism>
<sequence>MESLLAAGAGGIGVAAAAVGGFIAAATLAVAPPKNRRNPPPAVPGLPIIGNLHQLKEKKPHQTFTKWAEIYGPIYTIRTGASSVVVLNSTEVAKEAMVAKFSSISTRKLSKALTVLSHDKSMVATSDSGDFHKMGKRYIMLSMLGTSAQKQFRDTRDMIINNMLSTFHQLVKDDPHAPLIFRDVFKDELFRLSMIQSLGEDVSSVYVDEFGRDISKEEIYNATVTDMMMCAIEVDWRDFFPYLSWVPNKSFETRVFTTESRRTAVMRALIKQQKERIVRGEARTCYLDFLLAENTLTDEQLMMLVWEALIEAADTTLVTTEWAMYELAKNPDKQERLYQEIREVCGDEAVTEEHLPWLPYLNAVFQETLRRHSPVPLIPPRFVNEDTMLAGYDVPAGTEMVINLYGCNMNKKEWESPEEWAPERFAGGRFKVADMYKTMAFGAGRRVCAGSLQATHIACAAIARFVQEFGWRLREGDEEKVDTVQLTAYKLHPLHVHLTPRGRM</sequence>
<protein>
    <recommendedName>
        <fullName evidence="6">Ent-kaurene oxidase-like 3</fullName>
        <shortName evidence="6">OsKOL3</shortName>
        <ecNumber evidence="8">1.14.13.-</ecNumber>
    </recommendedName>
    <alternativeName>
        <fullName evidence="8">Cytochrome P450 701A19</fullName>
    </alternativeName>
    <alternativeName>
        <fullName evidence="5">Ent-kaurene oxidase 1</fullName>
        <shortName evidence="5">OsKO1</shortName>
    </alternativeName>
    <alternativeName>
        <fullName evidence="7">OsKOS4</fullName>
    </alternativeName>
</protein>
<keyword id="KW-0349">Heme</keyword>
<keyword id="KW-0408">Iron</keyword>
<keyword id="KW-0472">Membrane</keyword>
<keyword id="KW-0479">Metal-binding</keyword>
<keyword id="KW-0503">Monooxygenase</keyword>
<keyword id="KW-0560">Oxidoreductase</keyword>
<keyword id="KW-1185">Reference proteome</keyword>
<keyword id="KW-0812">Transmembrane</keyword>
<keyword id="KW-1133">Transmembrane helix</keyword>
<name>C701S_ORYSJ</name>
<accession>Q5Z5R7</accession>
<accession>A0A0P0WY89</accession>
<accession>Q68YV7</accession>
<feature type="chain" id="PRO_0000430734" description="Ent-kaurene oxidase-like 3">
    <location>
        <begin position="1"/>
        <end position="504"/>
    </location>
</feature>
<feature type="transmembrane region" description="Helical" evidence="2">
    <location>
        <begin position="3"/>
        <end position="23"/>
    </location>
</feature>
<feature type="binding site" description="axial binding residue" evidence="1">
    <location>
        <position position="448"/>
    </location>
    <ligand>
        <name>heme</name>
        <dbReference type="ChEBI" id="CHEBI:30413"/>
    </ligand>
    <ligandPart>
        <name>Fe</name>
        <dbReference type="ChEBI" id="CHEBI:18248"/>
    </ligandPart>
</feature>
<feature type="sequence conflict" description="In Ref. 1; AAT91065." ref="1">
    <original>N</original>
    <variation>Y</variation>
    <location>
        <position position="35"/>
    </location>
</feature>
<feature type="sequence conflict" description="In Ref. 1; AAT91065." ref="1">
    <original>K</original>
    <variation>R</variation>
    <location>
        <position position="66"/>
    </location>
</feature>
<feature type="sequence conflict" description="In Ref. 1; AAT91065." ref="1">
    <original>D</original>
    <variation>N</variation>
    <location>
        <position position="187"/>
    </location>
</feature>
<feature type="sequence conflict" description="In Ref. 1; AAT91065." ref="1">
    <original>Q</original>
    <variation>R</variation>
    <location>
        <position position="467"/>
    </location>
</feature>
<feature type="sequence conflict" description="In Ref. 1; AAT91065." ref="1">
    <original>P</original>
    <variation>R</variation>
    <location>
        <position position="500"/>
    </location>
</feature>
<proteinExistence type="evidence at transcript level"/>